<protein>
    <recommendedName>
        <fullName evidence="1">DNA mismatch repair protein MutL</fullName>
    </recommendedName>
</protein>
<keyword id="KW-0227">DNA damage</keyword>
<keyword id="KW-0234">DNA repair</keyword>
<keyword id="KW-1185">Reference proteome</keyword>
<reference key="1">
    <citation type="journal article" date="2007" name="PLoS Biol.">
        <title>Evolution of symbiotic bacteria in the distal human intestine.</title>
        <authorList>
            <person name="Xu J."/>
            <person name="Mahowald M.A."/>
            <person name="Ley R.E."/>
            <person name="Lozupone C.A."/>
            <person name="Hamady M."/>
            <person name="Martens E.C."/>
            <person name="Henrissat B."/>
            <person name="Coutinho P.M."/>
            <person name="Minx P."/>
            <person name="Latreille P."/>
            <person name="Cordum H."/>
            <person name="Van Brunt A."/>
            <person name="Kim K."/>
            <person name="Fulton R.S."/>
            <person name="Fulton L.A."/>
            <person name="Clifton S.W."/>
            <person name="Wilson R.K."/>
            <person name="Knight R.D."/>
            <person name="Gordon J.I."/>
        </authorList>
    </citation>
    <scope>NUCLEOTIDE SEQUENCE [LARGE SCALE GENOMIC DNA]</scope>
    <source>
        <strain>ATCC 8503 / DSM 20701 / CIP 104284 / JCM 5825 / NCTC 11152</strain>
    </source>
</reference>
<organism>
    <name type="scientific">Parabacteroides distasonis (strain ATCC 8503 / DSM 20701 / CIP 104284 / JCM 5825 / NCTC 11152)</name>
    <dbReference type="NCBI Taxonomy" id="435591"/>
    <lineage>
        <taxon>Bacteria</taxon>
        <taxon>Pseudomonadati</taxon>
        <taxon>Bacteroidota</taxon>
        <taxon>Bacteroidia</taxon>
        <taxon>Bacteroidales</taxon>
        <taxon>Tannerellaceae</taxon>
        <taxon>Parabacteroides</taxon>
    </lineage>
</organism>
<evidence type="ECO:0000255" key="1">
    <source>
        <dbReference type="HAMAP-Rule" id="MF_00149"/>
    </source>
</evidence>
<accession>A6LEJ8</accession>
<proteinExistence type="inferred from homology"/>
<comment type="function">
    <text evidence="1">This protein is involved in the repair of mismatches in DNA. It is required for dam-dependent methyl-directed DNA mismatch repair. May act as a 'molecular matchmaker', a protein that promotes the formation of a stable complex between two or more DNA-binding proteins in an ATP-dependent manner without itself being part of a final effector complex.</text>
</comment>
<comment type="similarity">
    <text evidence="1">Belongs to the DNA mismatch repair MutL/HexB family.</text>
</comment>
<name>MUTL_PARD8</name>
<dbReference type="EMBL" id="CP000140">
    <property type="protein sequence ID" value="ABR44112.1"/>
    <property type="molecule type" value="Genomic_DNA"/>
</dbReference>
<dbReference type="RefSeq" id="WP_005853950.1">
    <property type="nucleotide sequence ID" value="NZ_LR215978.1"/>
</dbReference>
<dbReference type="SMR" id="A6LEJ8"/>
<dbReference type="STRING" id="435591.BDI_2387"/>
<dbReference type="PaxDb" id="435591-BDI_2387"/>
<dbReference type="KEGG" id="pdi:BDI_2387"/>
<dbReference type="eggNOG" id="COG0323">
    <property type="taxonomic scope" value="Bacteria"/>
</dbReference>
<dbReference type="HOGENOM" id="CLU_004131_4_0_10"/>
<dbReference type="BioCyc" id="PDIS435591:G1G5A-2453-MONOMER"/>
<dbReference type="Proteomes" id="UP000000566">
    <property type="component" value="Chromosome"/>
</dbReference>
<dbReference type="GO" id="GO:0032300">
    <property type="term" value="C:mismatch repair complex"/>
    <property type="evidence" value="ECO:0007669"/>
    <property type="project" value="InterPro"/>
</dbReference>
<dbReference type="GO" id="GO:0005524">
    <property type="term" value="F:ATP binding"/>
    <property type="evidence" value="ECO:0007669"/>
    <property type="project" value="InterPro"/>
</dbReference>
<dbReference type="GO" id="GO:0016887">
    <property type="term" value="F:ATP hydrolysis activity"/>
    <property type="evidence" value="ECO:0007669"/>
    <property type="project" value="InterPro"/>
</dbReference>
<dbReference type="GO" id="GO:0140664">
    <property type="term" value="F:ATP-dependent DNA damage sensor activity"/>
    <property type="evidence" value="ECO:0007669"/>
    <property type="project" value="InterPro"/>
</dbReference>
<dbReference type="GO" id="GO:0030983">
    <property type="term" value="F:mismatched DNA binding"/>
    <property type="evidence" value="ECO:0007669"/>
    <property type="project" value="InterPro"/>
</dbReference>
<dbReference type="GO" id="GO:0006298">
    <property type="term" value="P:mismatch repair"/>
    <property type="evidence" value="ECO:0007669"/>
    <property type="project" value="UniProtKB-UniRule"/>
</dbReference>
<dbReference type="CDD" id="cd16926">
    <property type="entry name" value="HATPase_MutL-MLH-PMS-like"/>
    <property type="match status" value="1"/>
</dbReference>
<dbReference type="CDD" id="cd00782">
    <property type="entry name" value="MutL_Trans"/>
    <property type="match status" value="1"/>
</dbReference>
<dbReference type="FunFam" id="3.30.565.10:FF:000003">
    <property type="entry name" value="DNA mismatch repair endonuclease MutL"/>
    <property type="match status" value="1"/>
</dbReference>
<dbReference type="Gene3D" id="3.30.230.10">
    <property type="match status" value="1"/>
</dbReference>
<dbReference type="Gene3D" id="3.30.565.10">
    <property type="entry name" value="Histidine kinase-like ATPase, C-terminal domain"/>
    <property type="match status" value="1"/>
</dbReference>
<dbReference type="Gene3D" id="3.30.1540.20">
    <property type="entry name" value="MutL, C-terminal domain, dimerisation subdomain"/>
    <property type="match status" value="1"/>
</dbReference>
<dbReference type="Gene3D" id="3.30.1370.100">
    <property type="entry name" value="MutL, C-terminal domain, regulatory subdomain"/>
    <property type="match status" value="1"/>
</dbReference>
<dbReference type="HAMAP" id="MF_00149">
    <property type="entry name" value="DNA_mis_repair"/>
    <property type="match status" value="1"/>
</dbReference>
<dbReference type="InterPro" id="IPR014762">
    <property type="entry name" value="DNA_mismatch_repair_CS"/>
</dbReference>
<dbReference type="InterPro" id="IPR020667">
    <property type="entry name" value="DNA_mismatch_repair_MutL"/>
</dbReference>
<dbReference type="InterPro" id="IPR013507">
    <property type="entry name" value="DNA_mismatch_S5_2-like"/>
</dbReference>
<dbReference type="InterPro" id="IPR036890">
    <property type="entry name" value="HATPase_C_sf"/>
</dbReference>
<dbReference type="InterPro" id="IPR002099">
    <property type="entry name" value="MutL/Mlh/PMS"/>
</dbReference>
<dbReference type="InterPro" id="IPR038973">
    <property type="entry name" value="MutL/Mlh/Pms-like"/>
</dbReference>
<dbReference type="InterPro" id="IPR014790">
    <property type="entry name" value="MutL_C"/>
</dbReference>
<dbReference type="InterPro" id="IPR042120">
    <property type="entry name" value="MutL_C_dimsub"/>
</dbReference>
<dbReference type="InterPro" id="IPR042121">
    <property type="entry name" value="MutL_C_regsub"/>
</dbReference>
<dbReference type="InterPro" id="IPR037198">
    <property type="entry name" value="MutL_C_sf"/>
</dbReference>
<dbReference type="InterPro" id="IPR020568">
    <property type="entry name" value="Ribosomal_Su5_D2-typ_SF"/>
</dbReference>
<dbReference type="InterPro" id="IPR014721">
    <property type="entry name" value="Ribsml_uS5_D2-typ_fold_subgr"/>
</dbReference>
<dbReference type="NCBIfam" id="TIGR00585">
    <property type="entry name" value="mutl"/>
    <property type="match status" value="1"/>
</dbReference>
<dbReference type="PANTHER" id="PTHR10073">
    <property type="entry name" value="DNA MISMATCH REPAIR PROTEIN MLH, PMS, MUTL"/>
    <property type="match status" value="1"/>
</dbReference>
<dbReference type="PANTHER" id="PTHR10073:SF12">
    <property type="entry name" value="DNA MISMATCH REPAIR PROTEIN MLH1"/>
    <property type="match status" value="1"/>
</dbReference>
<dbReference type="Pfam" id="PF01119">
    <property type="entry name" value="DNA_mis_repair"/>
    <property type="match status" value="1"/>
</dbReference>
<dbReference type="Pfam" id="PF13589">
    <property type="entry name" value="HATPase_c_3"/>
    <property type="match status" value="1"/>
</dbReference>
<dbReference type="Pfam" id="PF08676">
    <property type="entry name" value="MutL_C"/>
    <property type="match status" value="1"/>
</dbReference>
<dbReference type="SMART" id="SM01340">
    <property type="entry name" value="DNA_mis_repair"/>
    <property type="match status" value="1"/>
</dbReference>
<dbReference type="SMART" id="SM00853">
    <property type="entry name" value="MutL_C"/>
    <property type="match status" value="1"/>
</dbReference>
<dbReference type="SUPFAM" id="SSF55874">
    <property type="entry name" value="ATPase domain of HSP90 chaperone/DNA topoisomerase II/histidine kinase"/>
    <property type="match status" value="1"/>
</dbReference>
<dbReference type="SUPFAM" id="SSF118116">
    <property type="entry name" value="DNA mismatch repair protein MutL"/>
    <property type="match status" value="1"/>
</dbReference>
<dbReference type="SUPFAM" id="SSF54211">
    <property type="entry name" value="Ribosomal protein S5 domain 2-like"/>
    <property type="match status" value="1"/>
</dbReference>
<dbReference type="PROSITE" id="PS00058">
    <property type="entry name" value="DNA_MISMATCH_REPAIR_1"/>
    <property type="match status" value="1"/>
</dbReference>
<feature type="chain" id="PRO_1000058146" description="DNA mismatch repair protein MutL">
    <location>
        <begin position="1"/>
        <end position="615"/>
    </location>
</feature>
<gene>
    <name evidence="1" type="primary">mutL</name>
    <name type="ordered locus">BDI_2387</name>
</gene>
<sequence length="615" mass="68349">MSDIIHLLPDHIANQIAAGEVIQRPASVVKELVENAVDAGASNIQVNIKDAGKTLIQVIDDGKGMSETDARMAFERHATSKISTAEDLFSLHTMGFRGEALASIAAVAHIELRTRARGTELGTCLSIAGSNLESIEPEACNEGSIFSVKNLFFNVPARRKFLKSNETEFRNIINEFERIALVNPQVGMSLYHNDAEIFNLPESGLRQRIINIYGKSLNQKLLSLDAQSSMVTISGFVGRPDSAKKRGALQFFFVNGRYMKHPYFHKAIMQAYEQLIPAGDMPNYFVYFTLDPSSIDVNIHPTKTEIKFENEQPIWQILMAATREALAKSSAIPTIDFDVEDAIDIPVYNPVKKSEPSTYKAPKVQVDSSYNPFDTTSYKKPEFDWSKLYQGFENDRVAVQRESETFEDAPIEELPAEASDPEKLFTEVSNPCYQYKGRYIVTSLKSGLAIIDQHRAHVRILFDQYLSNIRQQQGVSQQVLFPEIVEFTAAEAAVLPSLLEDLCFVGFDLSNLGNDNYAINGLPAGIENLDPVNLVKDIVDRAIETGCAVHEKICEAIALSLAKAAAIRPGKSLSLEEMDHLIASLFSCSDSNLTPDGKTIISMLTDEELERRFKC</sequence>